<dbReference type="EMBL" id="BX908798">
    <property type="protein sequence ID" value="CAF24395.1"/>
    <property type="molecule type" value="Genomic_DNA"/>
</dbReference>
<dbReference type="RefSeq" id="WP_011176217.1">
    <property type="nucleotide sequence ID" value="NC_005861.2"/>
</dbReference>
<dbReference type="SMR" id="Q6MAK4"/>
<dbReference type="STRING" id="264201.pc1671"/>
<dbReference type="KEGG" id="pcu:PC_RS07990"/>
<dbReference type="eggNOG" id="COG0712">
    <property type="taxonomic scope" value="Bacteria"/>
</dbReference>
<dbReference type="HOGENOM" id="CLU_085114_4_0_0"/>
<dbReference type="OrthoDB" id="9802471at2"/>
<dbReference type="Proteomes" id="UP000000529">
    <property type="component" value="Chromosome"/>
</dbReference>
<dbReference type="GO" id="GO:0005886">
    <property type="term" value="C:plasma membrane"/>
    <property type="evidence" value="ECO:0007669"/>
    <property type="project" value="UniProtKB-SubCell"/>
</dbReference>
<dbReference type="GO" id="GO:0045259">
    <property type="term" value="C:proton-transporting ATP synthase complex"/>
    <property type="evidence" value="ECO:0007669"/>
    <property type="project" value="UniProtKB-KW"/>
</dbReference>
<dbReference type="GO" id="GO:0046933">
    <property type="term" value="F:proton-transporting ATP synthase activity, rotational mechanism"/>
    <property type="evidence" value="ECO:0007669"/>
    <property type="project" value="UniProtKB-UniRule"/>
</dbReference>
<dbReference type="Gene3D" id="1.10.520.20">
    <property type="entry name" value="N-terminal domain of the delta subunit of the F1F0-ATP synthase"/>
    <property type="match status" value="1"/>
</dbReference>
<dbReference type="HAMAP" id="MF_01416">
    <property type="entry name" value="ATP_synth_delta_bact"/>
    <property type="match status" value="1"/>
</dbReference>
<dbReference type="InterPro" id="IPR026015">
    <property type="entry name" value="ATP_synth_OSCP/delta_N_sf"/>
</dbReference>
<dbReference type="InterPro" id="IPR000711">
    <property type="entry name" value="ATPase_OSCP/dsu"/>
</dbReference>
<dbReference type="NCBIfam" id="TIGR01145">
    <property type="entry name" value="ATP_synt_delta"/>
    <property type="match status" value="1"/>
</dbReference>
<dbReference type="PANTHER" id="PTHR11910">
    <property type="entry name" value="ATP SYNTHASE DELTA CHAIN"/>
    <property type="match status" value="1"/>
</dbReference>
<dbReference type="Pfam" id="PF00213">
    <property type="entry name" value="OSCP"/>
    <property type="match status" value="1"/>
</dbReference>
<dbReference type="PRINTS" id="PR00125">
    <property type="entry name" value="ATPASEDELTA"/>
</dbReference>
<dbReference type="SUPFAM" id="SSF47928">
    <property type="entry name" value="N-terminal domain of the delta subunit of the F1F0-ATP synthase"/>
    <property type="match status" value="1"/>
</dbReference>
<sequence>MIAKGVSLRYSKALVDIATNPEQIKSHLLALEEFVGILETIPKLKELLFDPHLSTLTKKSILQRLFKDRLDETILNFLFVLIEKNRFKYIVDIRKEYHRLAKKRLGILEVRLLTAVSVSDIPQEKVRIKLQKTYQKEVEIQNVVNPDIVGGMILIMDHQIFDNSVKKRLAKLKVSLLTAKV</sequence>
<organism>
    <name type="scientific">Protochlamydia amoebophila (strain UWE25)</name>
    <dbReference type="NCBI Taxonomy" id="264201"/>
    <lineage>
        <taxon>Bacteria</taxon>
        <taxon>Pseudomonadati</taxon>
        <taxon>Chlamydiota</taxon>
        <taxon>Chlamydiia</taxon>
        <taxon>Parachlamydiales</taxon>
        <taxon>Parachlamydiaceae</taxon>
        <taxon>Candidatus Protochlamydia</taxon>
    </lineage>
</organism>
<protein>
    <recommendedName>
        <fullName evidence="1">ATP synthase subunit delta</fullName>
    </recommendedName>
    <alternativeName>
        <fullName evidence="1">ATP synthase F(1) sector subunit delta</fullName>
    </alternativeName>
    <alternativeName>
        <fullName evidence="1">F-type ATPase subunit delta</fullName>
        <shortName evidence="1">F-ATPase subunit delta</shortName>
    </alternativeName>
</protein>
<evidence type="ECO:0000255" key="1">
    <source>
        <dbReference type="HAMAP-Rule" id="MF_01416"/>
    </source>
</evidence>
<keyword id="KW-0066">ATP synthesis</keyword>
<keyword id="KW-0997">Cell inner membrane</keyword>
<keyword id="KW-1003">Cell membrane</keyword>
<keyword id="KW-0139">CF(1)</keyword>
<keyword id="KW-0375">Hydrogen ion transport</keyword>
<keyword id="KW-0406">Ion transport</keyword>
<keyword id="KW-0472">Membrane</keyword>
<keyword id="KW-1185">Reference proteome</keyword>
<keyword id="KW-0813">Transport</keyword>
<comment type="function">
    <text evidence="1">F(1)F(0) ATP synthase produces ATP from ADP in the presence of a proton or sodium gradient. F-type ATPases consist of two structural domains, F(1) containing the extramembraneous catalytic core and F(0) containing the membrane proton channel, linked together by a central stalk and a peripheral stalk. During catalysis, ATP synthesis in the catalytic domain of F(1) is coupled via a rotary mechanism of the central stalk subunits to proton translocation.</text>
</comment>
<comment type="function">
    <text evidence="1">This protein is part of the stalk that links CF(0) to CF(1). It either transmits conformational changes from CF(0) to CF(1) or is implicated in proton conduction.</text>
</comment>
<comment type="subunit">
    <text evidence="1">F-type ATPases have 2 components, F(1) - the catalytic core - and F(0) - the membrane proton channel. F(1) has five subunits: alpha(3), beta(3), gamma(1), delta(1), epsilon(1). F(0) has three main subunits: a(1), b(2) and c(10-14). The alpha and beta chains form an alternating ring which encloses part of the gamma chain. F(1) is attached to F(0) by a central stalk formed by the gamma and epsilon chains, while a peripheral stalk is formed by the delta and b chains.</text>
</comment>
<comment type="subcellular location">
    <subcellularLocation>
        <location evidence="1">Cell inner membrane</location>
        <topology evidence="1">Peripheral membrane protein</topology>
    </subcellularLocation>
</comment>
<comment type="similarity">
    <text evidence="1">Belongs to the ATPase delta chain family.</text>
</comment>
<proteinExistence type="inferred from homology"/>
<gene>
    <name evidence="1" type="primary">atpH</name>
    <name type="ordered locus">pc1671</name>
</gene>
<feature type="chain" id="PRO_0000382142" description="ATP synthase subunit delta">
    <location>
        <begin position="1"/>
        <end position="181"/>
    </location>
</feature>
<name>ATPD_PARUW</name>
<accession>Q6MAK4</accession>
<reference key="1">
    <citation type="journal article" date="2004" name="Science">
        <title>Illuminating the evolutionary history of chlamydiae.</title>
        <authorList>
            <person name="Horn M."/>
            <person name="Collingro A."/>
            <person name="Schmitz-Esser S."/>
            <person name="Beier C.L."/>
            <person name="Purkhold U."/>
            <person name="Fartmann B."/>
            <person name="Brandt P."/>
            <person name="Nyakatura G.J."/>
            <person name="Droege M."/>
            <person name="Frishman D."/>
            <person name="Rattei T."/>
            <person name="Mewes H.-W."/>
            <person name="Wagner M."/>
        </authorList>
    </citation>
    <scope>NUCLEOTIDE SEQUENCE [LARGE SCALE GENOMIC DNA]</scope>
    <source>
        <strain>UWE25</strain>
    </source>
</reference>